<dbReference type="EMBL" id="X61575">
    <property type="protein sequence ID" value="CAA43775.1"/>
    <property type="molecule type" value="Genomic_DNA"/>
</dbReference>
<dbReference type="EMBL" id="U01159">
    <property type="protein sequence ID" value="AAC44192.1"/>
    <property type="molecule type" value="Genomic_DNA"/>
</dbReference>
<dbReference type="EMBL" id="AP001918">
    <property type="protein sequence ID" value="BAA97959.1"/>
    <property type="molecule type" value="Genomic_DNA"/>
</dbReference>
<dbReference type="EMBL" id="M60427">
    <property type="protein sequence ID" value="AAA24915.1"/>
    <property type="molecule type" value="Genomic_DNA"/>
</dbReference>
<dbReference type="PIR" id="S23991">
    <property type="entry name" value="S23991"/>
</dbReference>
<dbReference type="RefSeq" id="NP_061468.1">
    <property type="nucleotide sequence ID" value="NC_002483.1"/>
</dbReference>
<dbReference type="RefSeq" id="WP_000821835.1">
    <property type="nucleotide sequence ID" value="NZ_JACEFS010000047.1"/>
</dbReference>
<dbReference type="KEGG" id="ecoc:C3026_24545"/>
<dbReference type="PATRIC" id="fig|83333.107.peg.623"/>
<dbReference type="OrthoDB" id="5297981at2"/>
<dbReference type="GO" id="GO:0009279">
    <property type="term" value="C:cell outer membrane"/>
    <property type="evidence" value="ECO:0007669"/>
    <property type="project" value="UniProtKB-SubCell"/>
</dbReference>
<dbReference type="InterPro" id="IPR014121">
    <property type="entry name" value="TraN_Ftype"/>
</dbReference>
<dbReference type="NCBIfam" id="NF009010">
    <property type="entry name" value="PRK12355.1-4"/>
    <property type="match status" value="1"/>
</dbReference>
<dbReference type="NCBIfam" id="TIGR02750">
    <property type="entry name" value="TraN_Ftype"/>
    <property type="match status" value="1"/>
</dbReference>
<dbReference type="Pfam" id="PF06986">
    <property type="entry name" value="F_T4SS_TraN"/>
    <property type="match status" value="1"/>
</dbReference>
<name>TRAN_ECOLI</name>
<accession>P24082</accession>
<geneLocation type="plasmid">
    <name>F</name>
</geneLocation>
<organism>
    <name type="scientific">Escherichia coli (strain K12)</name>
    <dbReference type="NCBI Taxonomy" id="83333"/>
    <lineage>
        <taxon>Bacteria</taxon>
        <taxon>Pseudomonadati</taxon>
        <taxon>Pseudomonadota</taxon>
        <taxon>Gammaproteobacteria</taxon>
        <taxon>Enterobacterales</taxon>
        <taxon>Enterobacteriaceae</taxon>
        <taxon>Escherichia</taxon>
    </lineage>
</organism>
<reference key="1">
    <citation type="journal article" date="1992" name="J. Mol. Biol.">
        <title>Characterization of the F plasmid mating aggregation gene traN and of a new F transfer region locus trbE.</title>
        <authorList>
            <person name="Maneewannakul S."/>
            <person name="Kathir P."/>
            <person name="Ippen-Ihler K."/>
        </authorList>
    </citation>
    <scope>NUCLEOTIDE SEQUENCE [GENOMIC DNA]</scope>
    <scope>FUNCTION</scope>
    <scope>SUBUNIT</scope>
    <scope>SUBCELLULAR LOCATION</scope>
    <scope>MUTAGENESIS OF 131-GLN--GLN-602</scope>
    <source>
        <strain>K12</strain>
        <plasmid>F</plasmid>
    </source>
</reference>
<reference key="2">
    <citation type="journal article" date="1994" name="Microbiol. Rev.">
        <title>Analysis of the sequence and gene products of the transfer region of the F sex factor.</title>
        <authorList>
            <person name="Frost L.S."/>
            <person name="Ippen-Ihler K."/>
            <person name="Skurray R.A."/>
        </authorList>
    </citation>
    <scope>NUCLEOTIDE SEQUENCE [GENOMIC DNA]</scope>
</reference>
<reference key="3">
    <citation type="submission" date="2000-04" db="EMBL/GenBank/DDBJ databases">
        <title>Complete nucleotide sequence of the F plasmid: its implications for organization and diversification of plasmid genomes.</title>
        <authorList>
            <person name="Shimizu H."/>
            <person name="Saitoh Y."/>
            <person name="Suda Y."/>
            <person name="Uehara K."/>
            <person name="Sampei G."/>
            <person name="Mizobuchi K."/>
        </authorList>
    </citation>
    <scope>NUCLEOTIDE SEQUENCE [LARGE SCALE GENOMIC DNA]</scope>
    <source>
        <strain>K12 / CR63</strain>
    </source>
</reference>
<reference key="4">
    <citation type="journal article" date="1991" name="J. Bacteriol.">
        <title>Characterization of trbC, a new F plasmid tra operon gene that is essential to conjugative transfer.</title>
        <authorList>
            <person name="Maneewannakul S."/>
            <person name="Maneewannakul K."/>
            <person name="Ippen-Ihler K."/>
        </authorList>
    </citation>
    <scope>NUCLEOTIDE SEQUENCE [GENOMIC DNA] OF 1-19</scope>
    <source>
        <strain>K12</strain>
    </source>
</reference>
<reference key="5">
    <citation type="journal article" date="1998" name="J. Bacteriol.">
        <title>Genetic analysis of the role of the transfer gene, traN, of the F and R100-1 plasmids in mating pair stabilization during conjugation.</title>
        <authorList>
            <person name="Klimke W.A."/>
            <person name="Frost L.S."/>
        </authorList>
    </citation>
    <scope>FUNCTION</scope>
    <scope>DISRUPTION PHENOTYPE</scope>
    <scope>MUTAGENESIS OF LYS-90 AND 584-VAL--GLN-602</scope>
    <source>
        <strain>JC3272</strain>
        <plasmid>F</plasmid>
    </source>
</reference>
<reference key="6">
    <citation type="journal article" date="2005" name="Microbiology">
        <title>The mating pair stabilization protein, TraN, of the F plasmid is an outer-membrane protein with two regions that are important for its function in conjugation.</title>
        <authorList>
            <person name="Klimke W.A."/>
            <person name="Rypien C.D."/>
            <person name="Klinger B."/>
            <person name="Kennedy R.A."/>
            <person name="Rodriguez-Maillard J.M."/>
            <person name="Frost L.S."/>
        </authorList>
    </citation>
    <scope>FUNCTION</scope>
    <scope>SUBUNIT</scope>
    <scope>SUBCELLULAR LOCATION</scope>
    <scope>DOMAIN</scope>
    <scope>PUTATIVE TOPOLOGY</scope>
    <scope>DISULFIDE BOND</scope>
    <scope>MUTAGENESIS OF CYS-147; CYS-478; 501-CYS--CYS-517; 501-CYS--CYS-509; CYS-501; 509-CYS--CYS-517; CYS-509; CYS-517 AND CYS-548</scope>
    <source>
        <plasmid>F</plasmid>
    </source>
</reference>
<proteinExistence type="evidence at protein level"/>
<sequence length="602" mass="65715">MKRILPLILALVAGMAQADSNSDYRAGSDFAHQIKGQGSSSIQGFKPQESIPGYNANPDETKYYGGVTAGGDGGLKNDGTTEWATGETGKTITESFMNKPKDILSPDAPFIQTGRDVVNRADSIVGNTGQQCSAQEISRSEYTNYTCERDLQVEQYCTRTARMELQGSTTWETRTLEYEMSQLPAREVNGQYVVSITSPVTGEIVDAHYSWSRTYLQKSVPMTITVLGTPLSWNAKYSADASFTPVQKTLTAGVAFTSSHPVRVGNTKFKRHTAMKLRLVVRVKKASYTPYVVWSESCPFSKELGKLTKTECTEAGGNRTLVKDGQSYSMYQSCWAYRDTYVTQSADKGTCQTYTDNPACTLVSHQCAFYSEEGACLHEYATYSCESKTSGKVMVCGGDVFCLDGECDKAQSGKSNDFAEAVSQLAALAAAGKDVAALNGVDVRAFTGQAKFCKKAAAGYSNCCKDSGWGQDIGLAKCSSDEKALAKAKSNKLTVSVGEFCSKKVLGVCLEKKRSYCQFDSKLAQIVQQQGRNGQLRISFGSAKHPDCRGITVDELQKIQFNRLDFTNFYEDLMNNQKIPDSGVLTQKVKEQIADQLKQAGQ</sequence>
<protein>
    <recommendedName>
        <fullName>Mating pair stabilization protein TraN</fullName>
    </recommendedName>
</protein>
<evidence type="ECO:0000255" key="1"/>
<evidence type="ECO:0000269" key="2">
    <source>
    </source>
</evidence>
<evidence type="ECO:0000269" key="3">
    <source>
    </source>
</evidence>
<evidence type="ECO:0000269" key="4">
    <source>
    </source>
</evidence>
<evidence type="ECO:0000305" key="5">
    <source>
    </source>
</evidence>
<evidence type="ECO:0000305" key="6">
    <source>
    </source>
</evidence>
<evidence type="ECO:0000305" key="7">
    <source>
    </source>
</evidence>
<feature type="signal peptide" evidence="1">
    <location>
        <begin position="1"/>
        <end position="18"/>
    </location>
</feature>
<feature type="chain" id="PRO_0000024508" description="Mating pair stabilization protein TraN">
    <location>
        <begin position="19"/>
        <end position="602"/>
    </location>
</feature>
<feature type="mutagenesis site" description="90% conjugation efficiency." evidence="4">
    <original>K</original>
    <variation>T</variation>
    <location>
        <position position="90"/>
    </location>
</feature>
<feature type="mutagenesis site" description="In traN548; 0.03% conjugation efficiency." evidence="2">
    <location>
        <begin position="131"/>
        <end position="602"/>
    </location>
</feature>
<feature type="mutagenesis site" description="1.7% conjugation efficiency." evidence="3">
    <original>C</original>
    <variation>S</variation>
    <location>
        <position position="147"/>
    </location>
</feature>
<feature type="mutagenesis site" description="1.5% conjugation efficiency." evidence="3">
    <original>C</original>
    <variation>S</variation>
    <location>
        <position position="478"/>
    </location>
</feature>
<feature type="mutagenesis site" description="0.3% conjugation efficiency." evidence="3">
    <original>CSKKVLGVCLEKKRSYC</original>
    <variation>SSKKVLGVCLEKKRSYS</variation>
    <location>
        <begin position="501"/>
        <end position="517"/>
    </location>
</feature>
<feature type="mutagenesis site" description="2.3% conjugation efficiency." evidence="3">
    <original>CSKKVLGVC</original>
    <variation>SSKKVLGVS</variation>
    <location>
        <begin position="501"/>
        <end position="509"/>
    </location>
</feature>
<feature type="mutagenesis site" description="1.7% conjugation efficiency." evidence="3">
    <original>C</original>
    <variation>S</variation>
    <location>
        <position position="501"/>
    </location>
</feature>
<feature type="mutagenesis site" description="0.004% conjugation efficiency." evidence="3">
    <original>CLEKKRSYC</original>
    <variation>SLEKKRSYS</variation>
    <location>
        <begin position="509"/>
        <end position="517"/>
    </location>
</feature>
<feature type="mutagenesis site" description="5.4% conjugation efficiency." evidence="3">
    <original>C</original>
    <variation>S</variation>
    <location>
        <position position="509"/>
    </location>
</feature>
<feature type="mutagenesis site" description="0.4% conjugation efficiency." evidence="3">
    <original>C</original>
    <variation>S</variation>
    <location>
        <position position="517"/>
    </location>
</feature>
<feature type="mutagenesis site" description="0.1% conjugation efficiency." evidence="3">
    <original>C</original>
    <variation>S</variation>
    <location>
        <position position="548"/>
    </location>
</feature>
<feature type="mutagenesis site" description="0.015% conjugation efficiency." evidence="4">
    <location>
        <begin position="584"/>
        <end position="602"/>
    </location>
</feature>
<keyword id="KW-0998">Cell outer membrane</keyword>
<keyword id="KW-0184">Conjugation</keyword>
<keyword id="KW-1015">Disulfide bond</keyword>
<keyword id="KW-0472">Membrane</keyword>
<keyword id="KW-0614">Plasmid</keyword>
<keyword id="KW-0732">Signal</keyword>
<comment type="function">
    <text evidence="3 4 5">Essential for F plasmid conjugative transfer. May interact with the recipient cell surface to stabilize mating pairs initiated by F-pili. May interact with TraG (Probable). Transfer requires OmpA and lipopolysaccharide (LPS), which are possibly receptors for TraN (PubMed:16272376, PubMed:9696748).</text>
</comment>
<comment type="subunit">
    <text evidence="3 5 7">Interacts with OmpA of recipient cells (Probable) (PubMed:16272376). Might form multimers (PubMed:16272376). May interact with TraG (Probable).</text>
</comment>
<comment type="subcellular location">
    <subcellularLocation>
        <location evidence="2 3">Cell outer membrane</location>
    </subcellularLocation>
    <text evidence="2 3 6">Part of the protein is accessible to externally added proteases (PubMed:1593622, PubMed:16272376). A topology of the protein suggesting it is a beta-barrel has been proposed; this was not confirmed using bioinformatics programs available in April 2019 (Probable).</text>
</comment>
<comment type="domain">
    <text evidence="3">The first 350 residues are required for recognition of OmpA.</text>
</comment>
<comment type="PTM">
    <text evidence="3">Has higher gel mobility under non-reducing conditions, suggesting it has disulfide bonds; a dsbA deletion mutant has considerably less TraN that is still localized in the outer membrane.</text>
</comment>
<comment type="disruption phenotype">
    <text evidence="4">Greatly decreased conjugtive transfer.</text>
</comment>
<gene>
    <name type="primary">traN</name>
    <name type="ordered locus">ECOK12F089</name>
</gene>